<keyword id="KW-0963">Cytoplasm</keyword>
<keyword id="KW-0489">Methyltransferase</keyword>
<keyword id="KW-1185">Reference proteome</keyword>
<keyword id="KW-0698">rRNA processing</keyword>
<keyword id="KW-0949">S-adenosyl-L-methionine</keyword>
<keyword id="KW-0808">Transferase</keyword>
<gene>
    <name evidence="1" type="primary">rsmH</name>
    <name type="synonym">mraW</name>
    <name type="ordered locus">IL0428</name>
</gene>
<name>RSMH_IDILO</name>
<accession>Q5R0L7</accession>
<evidence type="ECO:0000255" key="1">
    <source>
        <dbReference type="HAMAP-Rule" id="MF_01007"/>
    </source>
</evidence>
<sequence>MITTSPQHVSVLLEESIEALATDPQGTYIDATFGRGGHTRALLNQLGDDARVIALDQDPEAIAAAAAFADDPRFQIIHTPFSNLQQVLDDLQLNRQVTGILFDLGVSSPQLDDAERGFSFMRDGPLDMRMNTTSGETAAEWLNRAEKDDISWVLKEYGEERFARRIASAIVMDREKKPFTRTKQLAEMIARVSPVKEKHKHPATRTFQAIRIHINRELEQIEQALEASLSGLKEDGRLVVISFHSLEDRLVKRFIRKHSEGKQLPPGLPVTEAERNKDKALEKVGKAIKPGKAEVQLNPRSRSSVLRIARRVRND</sequence>
<feature type="chain" id="PRO_0000108640" description="Ribosomal RNA small subunit methyltransferase H">
    <location>
        <begin position="1"/>
        <end position="315"/>
    </location>
</feature>
<feature type="binding site" evidence="1">
    <location>
        <begin position="36"/>
        <end position="38"/>
    </location>
    <ligand>
        <name>S-adenosyl-L-methionine</name>
        <dbReference type="ChEBI" id="CHEBI:59789"/>
    </ligand>
</feature>
<feature type="binding site" evidence="1">
    <location>
        <position position="56"/>
    </location>
    <ligand>
        <name>S-adenosyl-L-methionine</name>
        <dbReference type="ChEBI" id="CHEBI:59789"/>
    </ligand>
</feature>
<feature type="binding site" evidence="1">
    <location>
        <position position="81"/>
    </location>
    <ligand>
        <name>S-adenosyl-L-methionine</name>
        <dbReference type="ChEBI" id="CHEBI:59789"/>
    </ligand>
</feature>
<feature type="binding site" evidence="1">
    <location>
        <position position="103"/>
    </location>
    <ligand>
        <name>S-adenosyl-L-methionine</name>
        <dbReference type="ChEBI" id="CHEBI:59789"/>
    </ligand>
</feature>
<feature type="binding site" evidence="1">
    <location>
        <position position="110"/>
    </location>
    <ligand>
        <name>S-adenosyl-L-methionine</name>
        <dbReference type="ChEBI" id="CHEBI:59789"/>
    </ligand>
</feature>
<comment type="function">
    <text evidence="1">Specifically methylates the N4 position of cytidine in position 1402 (C1402) of 16S rRNA.</text>
</comment>
<comment type="catalytic activity">
    <reaction evidence="1">
        <text>cytidine(1402) in 16S rRNA + S-adenosyl-L-methionine = N(4)-methylcytidine(1402) in 16S rRNA + S-adenosyl-L-homocysteine + H(+)</text>
        <dbReference type="Rhea" id="RHEA:42928"/>
        <dbReference type="Rhea" id="RHEA-COMP:10286"/>
        <dbReference type="Rhea" id="RHEA-COMP:10287"/>
        <dbReference type="ChEBI" id="CHEBI:15378"/>
        <dbReference type="ChEBI" id="CHEBI:57856"/>
        <dbReference type="ChEBI" id="CHEBI:59789"/>
        <dbReference type="ChEBI" id="CHEBI:74506"/>
        <dbReference type="ChEBI" id="CHEBI:82748"/>
        <dbReference type="EC" id="2.1.1.199"/>
    </reaction>
</comment>
<comment type="subcellular location">
    <subcellularLocation>
        <location evidence="1">Cytoplasm</location>
    </subcellularLocation>
</comment>
<comment type="similarity">
    <text evidence="1">Belongs to the methyltransferase superfamily. RsmH family.</text>
</comment>
<dbReference type="EC" id="2.1.1.199" evidence="1"/>
<dbReference type="EMBL" id="AE017340">
    <property type="protein sequence ID" value="AAV81271.1"/>
    <property type="molecule type" value="Genomic_DNA"/>
</dbReference>
<dbReference type="RefSeq" id="WP_011233689.1">
    <property type="nucleotide sequence ID" value="NC_006512.1"/>
</dbReference>
<dbReference type="SMR" id="Q5R0L7"/>
<dbReference type="STRING" id="283942.IL0428"/>
<dbReference type="GeneID" id="41335580"/>
<dbReference type="KEGG" id="ilo:IL0428"/>
<dbReference type="eggNOG" id="COG0275">
    <property type="taxonomic scope" value="Bacteria"/>
</dbReference>
<dbReference type="HOGENOM" id="CLU_038422_2_0_6"/>
<dbReference type="OrthoDB" id="9806637at2"/>
<dbReference type="Proteomes" id="UP000001171">
    <property type="component" value="Chromosome"/>
</dbReference>
<dbReference type="GO" id="GO:0005737">
    <property type="term" value="C:cytoplasm"/>
    <property type="evidence" value="ECO:0007669"/>
    <property type="project" value="UniProtKB-SubCell"/>
</dbReference>
<dbReference type="GO" id="GO:0071424">
    <property type="term" value="F:rRNA (cytosine-N4-)-methyltransferase activity"/>
    <property type="evidence" value="ECO:0007669"/>
    <property type="project" value="UniProtKB-UniRule"/>
</dbReference>
<dbReference type="GO" id="GO:0070475">
    <property type="term" value="P:rRNA base methylation"/>
    <property type="evidence" value="ECO:0007669"/>
    <property type="project" value="UniProtKB-UniRule"/>
</dbReference>
<dbReference type="FunFam" id="1.10.150.170:FF:000001">
    <property type="entry name" value="Ribosomal RNA small subunit methyltransferase H"/>
    <property type="match status" value="1"/>
</dbReference>
<dbReference type="Gene3D" id="1.10.150.170">
    <property type="entry name" value="Putative methyltransferase TM0872, insert domain"/>
    <property type="match status" value="1"/>
</dbReference>
<dbReference type="Gene3D" id="3.40.50.150">
    <property type="entry name" value="Vaccinia Virus protein VP39"/>
    <property type="match status" value="1"/>
</dbReference>
<dbReference type="HAMAP" id="MF_01007">
    <property type="entry name" value="16SrRNA_methyltr_H"/>
    <property type="match status" value="1"/>
</dbReference>
<dbReference type="InterPro" id="IPR002903">
    <property type="entry name" value="RsmH"/>
</dbReference>
<dbReference type="InterPro" id="IPR023397">
    <property type="entry name" value="SAM-dep_MeTrfase_MraW_recog"/>
</dbReference>
<dbReference type="InterPro" id="IPR029063">
    <property type="entry name" value="SAM-dependent_MTases_sf"/>
</dbReference>
<dbReference type="NCBIfam" id="TIGR00006">
    <property type="entry name" value="16S rRNA (cytosine(1402)-N(4))-methyltransferase RsmH"/>
    <property type="match status" value="1"/>
</dbReference>
<dbReference type="PANTHER" id="PTHR11265:SF0">
    <property type="entry name" value="12S RRNA N4-METHYLCYTIDINE METHYLTRANSFERASE"/>
    <property type="match status" value="1"/>
</dbReference>
<dbReference type="PANTHER" id="PTHR11265">
    <property type="entry name" value="S-ADENOSYL-METHYLTRANSFERASE MRAW"/>
    <property type="match status" value="1"/>
</dbReference>
<dbReference type="Pfam" id="PF01795">
    <property type="entry name" value="Methyltransf_5"/>
    <property type="match status" value="1"/>
</dbReference>
<dbReference type="PIRSF" id="PIRSF004486">
    <property type="entry name" value="MraW"/>
    <property type="match status" value="1"/>
</dbReference>
<dbReference type="SUPFAM" id="SSF81799">
    <property type="entry name" value="Putative methyltransferase TM0872, insert domain"/>
    <property type="match status" value="1"/>
</dbReference>
<dbReference type="SUPFAM" id="SSF53335">
    <property type="entry name" value="S-adenosyl-L-methionine-dependent methyltransferases"/>
    <property type="match status" value="1"/>
</dbReference>
<proteinExistence type="inferred from homology"/>
<protein>
    <recommendedName>
        <fullName evidence="1">Ribosomal RNA small subunit methyltransferase H</fullName>
        <ecNumber evidence="1">2.1.1.199</ecNumber>
    </recommendedName>
    <alternativeName>
        <fullName evidence="1">16S rRNA m(4)C1402 methyltransferase</fullName>
    </alternativeName>
    <alternativeName>
        <fullName evidence="1">rRNA (cytosine-N(4)-)-methyltransferase RsmH</fullName>
    </alternativeName>
</protein>
<organism>
    <name type="scientific">Idiomarina loihiensis (strain ATCC BAA-735 / DSM 15497 / L2-TR)</name>
    <dbReference type="NCBI Taxonomy" id="283942"/>
    <lineage>
        <taxon>Bacteria</taxon>
        <taxon>Pseudomonadati</taxon>
        <taxon>Pseudomonadota</taxon>
        <taxon>Gammaproteobacteria</taxon>
        <taxon>Alteromonadales</taxon>
        <taxon>Idiomarinaceae</taxon>
        <taxon>Idiomarina</taxon>
    </lineage>
</organism>
<reference key="1">
    <citation type="journal article" date="2004" name="Proc. Natl. Acad. Sci. U.S.A.">
        <title>Genome sequence of the deep-sea gamma-proteobacterium Idiomarina loihiensis reveals amino acid fermentation as a source of carbon and energy.</title>
        <authorList>
            <person name="Hou S."/>
            <person name="Saw J.H."/>
            <person name="Lee K.S."/>
            <person name="Freitas T.A."/>
            <person name="Belisle C."/>
            <person name="Kawarabayasi Y."/>
            <person name="Donachie S.P."/>
            <person name="Pikina A."/>
            <person name="Galperin M.Y."/>
            <person name="Koonin E.V."/>
            <person name="Makarova K.S."/>
            <person name="Omelchenko M.V."/>
            <person name="Sorokin A."/>
            <person name="Wolf Y.I."/>
            <person name="Li Q.X."/>
            <person name="Keum Y.S."/>
            <person name="Campbell S."/>
            <person name="Denery J."/>
            <person name="Aizawa S."/>
            <person name="Shibata S."/>
            <person name="Malahoff A."/>
            <person name="Alam M."/>
        </authorList>
    </citation>
    <scope>NUCLEOTIDE SEQUENCE [LARGE SCALE GENOMIC DNA]</scope>
    <source>
        <strain>ATCC BAA-735 / DSM 15497 / L2-TR</strain>
    </source>
</reference>